<sequence>MIESNMLVLTLVIPVITAILLVFIGKRPIIKRYVALGGTLLTLVAAIINLANVVKHGPLRVELGSWKAPYSIVFVLDIFSALLIITSIIITAIVILYSYQTIGIERERYYYYFSVLFMLIGIIGAFTTGDIFNLFVFFEVFLMSSYFLLVIGSTKIQLQETIKYVLVNVVSSSFFVMGVAILYSVVGTLNLADISNKLANLSAHDSGLVNIVFILFIFVFATKAGVFPMFVWLPSAYYAPPIPIIAFFGALLTKVGVYAIARTLSLFFSDNVSFSHYVILFLALLTIIFGCVGAVAYANIKKIILYNVMIAVGVILVGVAMMTESGMIGAIYYTLHDMLVKLALFLLIGIMIKITGTADLRQFGGLIKRYPVLGWSFFIAALSLAGIPPLSGFYGKFFIVQSTFERGFYLSGVIVLLSSLVVLYSVIRIFLQGFFGQPKGYDLNNKVDVKYLTTIAIVAVVITVLYGLSADYLYPMVKAGAETFYNPSTYVKAVLGGK</sequence>
<accession>Q2YWT7</accession>
<comment type="function">
    <text evidence="1">Mnh complex is a Na(+)/H(+) antiporter involved in Na(+) excretion.</text>
</comment>
<comment type="subunit">
    <text evidence="1">May form a heterooligomeric complex that consists of seven subunits: mnhA1, mnhB1, mnhC1, mnhD1, mnhE1, mnhF1 and mnhG1.</text>
</comment>
<comment type="subcellular location">
    <subcellularLocation>
        <location evidence="3">Cell membrane</location>
        <topology evidence="3">Multi-pass membrane protein</topology>
    </subcellularLocation>
</comment>
<comment type="similarity">
    <text evidence="3">Belongs to the CPA3 antiporters (TC 2.A.63) subunit D family.</text>
</comment>
<feature type="chain" id="PRO_0000372129" description="Na(+)/H(+) antiporter subunit D1">
    <location>
        <begin position="1"/>
        <end position="498"/>
    </location>
</feature>
<feature type="transmembrane region" description="Helical" evidence="2">
    <location>
        <begin position="5"/>
        <end position="25"/>
    </location>
</feature>
<feature type="transmembrane region" description="Helical" evidence="2">
    <location>
        <begin position="34"/>
        <end position="54"/>
    </location>
</feature>
<feature type="transmembrane region" description="Helical" evidence="2">
    <location>
        <begin position="75"/>
        <end position="95"/>
    </location>
</feature>
<feature type="transmembrane region" description="Helical" evidence="2">
    <location>
        <begin position="109"/>
        <end position="129"/>
    </location>
</feature>
<feature type="transmembrane region" description="Helical" evidence="2">
    <location>
        <begin position="131"/>
        <end position="151"/>
    </location>
</feature>
<feature type="transmembrane region" description="Helical" evidence="2">
    <location>
        <begin position="169"/>
        <end position="189"/>
    </location>
</feature>
<feature type="transmembrane region" description="Helical" evidence="2">
    <location>
        <begin position="211"/>
        <end position="231"/>
    </location>
</feature>
<feature type="transmembrane region" description="Helical" evidence="2">
    <location>
        <begin position="241"/>
        <end position="261"/>
    </location>
</feature>
<feature type="transmembrane region" description="Helical" evidence="2">
    <location>
        <begin position="278"/>
        <end position="298"/>
    </location>
</feature>
<feature type="transmembrane region" description="Helical" evidence="2">
    <location>
        <begin position="303"/>
        <end position="323"/>
    </location>
</feature>
<feature type="transmembrane region" description="Helical" evidence="2">
    <location>
        <begin position="338"/>
        <end position="358"/>
    </location>
</feature>
<feature type="transmembrane region" description="Helical" evidence="2">
    <location>
        <begin position="373"/>
        <end position="393"/>
    </location>
</feature>
<feature type="transmembrane region" description="Helical" evidence="2">
    <location>
        <begin position="407"/>
        <end position="427"/>
    </location>
</feature>
<feature type="transmembrane region" description="Helical" evidence="2">
    <location>
        <begin position="455"/>
        <end position="475"/>
    </location>
</feature>
<gene>
    <name type="primary">mnhD1</name>
    <name type="ordered locus">SAB0816c</name>
</gene>
<protein>
    <recommendedName>
        <fullName>Na(+)/H(+) antiporter subunit D1</fullName>
    </recommendedName>
    <alternativeName>
        <fullName>Mnh complex subunit D1</fullName>
    </alternativeName>
</protein>
<organism>
    <name type="scientific">Staphylococcus aureus (strain bovine RF122 / ET3-1)</name>
    <dbReference type="NCBI Taxonomy" id="273036"/>
    <lineage>
        <taxon>Bacteria</taxon>
        <taxon>Bacillati</taxon>
        <taxon>Bacillota</taxon>
        <taxon>Bacilli</taxon>
        <taxon>Bacillales</taxon>
        <taxon>Staphylococcaceae</taxon>
        <taxon>Staphylococcus</taxon>
    </lineage>
</organism>
<reference key="1">
    <citation type="journal article" date="2007" name="PLoS ONE">
        <title>Molecular correlates of host specialization in Staphylococcus aureus.</title>
        <authorList>
            <person name="Herron-Olson L."/>
            <person name="Fitzgerald J.R."/>
            <person name="Musser J.M."/>
            <person name="Kapur V."/>
        </authorList>
    </citation>
    <scope>NUCLEOTIDE SEQUENCE [LARGE SCALE GENOMIC DNA]</scope>
    <source>
        <strain>bovine RF122 / ET3-1</strain>
    </source>
</reference>
<keyword id="KW-0050">Antiport</keyword>
<keyword id="KW-1003">Cell membrane</keyword>
<keyword id="KW-0375">Hydrogen ion transport</keyword>
<keyword id="KW-0406">Ion transport</keyword>
<keyword id="KW-0472">Membrane</keyword>
<keyword id="KW-0915">Sodium</keyword>
<keyword id="KW-0739">Sodium transport</keyword>
<keyword id="KW-0812">Transmembrane</keyword>
<keyword id="KW-1133">Transmembrane helix</keyword>
<keyword id="KW-0813">Transport</keyword>
<evidence type="ECO:0000250" key="1"/>
<evidence type="ECO:0000255" key="2"/>
<evidence type="ECO:0000305" key="3"/>
<name>MNHD1_STAAB</name>
<proteinExistence type="inferred from homology"/>
<dbReference type="EMBL" id="AJ938182">
    <property type="protein sequence ID" value="CAI80504.1"/>
    <property type="molecule type" value="Genomic_DNA"/>
</dbReference>
<dbReference type="RefSeq" id="WP_000573086.1">
    <property type="nucleotide sequence ID" value="NC_007622.1"/>
</dbReference>
<dbReference type="SMR" id="Q2YWT7"/>
<dbReference type="KEGG" id="sab:SAB0816c"/>
<dbReference type="HOGENOM" id="CLU_007100_9_2_9"/>
<dbReference type="GO" id="GO:0005886">
    <property type="term" value="C:plasma membrane"/>
    <property type="evidence" value="ECO:0007669"/>
    <property type="project" value="UniProtKB-SubCell"/>
</dbReference>
<dbReference type="GO" id="GO:0008137">
    <property type="term" value="F:NADH dehydrogenase (ubiquinone) activity"/>
    <property type="evidence" value="ECO:0007669"/>
    <property type="project" value="InterPro"/>
</dbReference>
<dbReference type="GO" id="GO:0015386">
    <property type="term" value="F:potassium:proton antiporter activity"/>
    <property type="evidence" value="ECO:0007669"/>
    <property type="project" value="InterPro"/>
</dbReference>
<dbReference type="GO" id="GO:0042773">
    <property type="term" value="P:ATP synthesis coupled electron transport"/>
    <property type="evidence" value="ECO:0007669"/>
    <property type="project" value="InterPro"/>
</dbReference>
<dbReference type="GO" id="GO:0006814">
    <property type="term" value="P:sodium ion transport"/>
    <property type="evidence" value="ECO:0007669"/>
    <property type="project" value="UniProtKB-KW"/>
</dbReference>
<dbReference type="InterPro" id="IPR050586">
    <property type="entry name" value="CPA3_Na-H_Antiporter_D"/>
</dbReference>
<dbReference type="InterPro" id="IPR004775">
    <property type="entry name" value="MnhD1"/>
</dbReference>
<dbReference type="InterPro" id="IPR003918">
    <property type="entry name" value="NADH_UbQ_OxRdtase"/>
</dbReference>
<dbReference type="InterPro" id="IPR001750">
    <property type="entry name" value="ND/Mrp_TM"/>
</dbReference>
<dbReference type="NCBIfam" id="TIGR00944">
    <property type="entry name" value="2a6301s04"/>
    <property type="match status" value="1"/>
</dbReference>
<dbReference type="NCBIfam" id="NF005818">
    <property type="entry name" value="PRK07691.1"/>
    <property type="match status" value="1"/>
</dbReference>
<dbReference type="PANTHER" id="PTHR42703:SF1">
    <property type="entry name" value="NA(+)_H(+) ANTIPORTER SUBUNIT D1"/>
    <property type="match status" value="1"/>
</dbReference>
<dbReference type="PANTHER" id="PTHR42703">
    <property type="entry name" value="NADH DEHYDROGENASE"/>
    <property type="match status" value="1"/>
</dbReference>
<dbReference type="Pfam" id="PF00361">
    <property type="entry name" value="Proton_antipo_M"/>
    <property type="match status" value="1"/>
</dbReference>
<dbReference type="PRINTS" id="PR01437">
    <property type="entry name" value="NUOXDRDTASE4"/>
</dbReference>